<comment type="function">
    <text evidence="1">Involved in the regulation of the intracellular balance of NAD and NADP, and is a key enzyme in the biosynthesis of NADP. Catalyzes specifically the phosphorylation on 2'-hydroxyl of the adenosine moiety of NAD to yield NADP.</text>
</comment>
<comment type="catalytic activity">
    <reaction evidence="1">
        <text>NAD(+) + ATP = ADP + NADP(+) + H(+)</text>
        <dbReference type="Rhea" id="RHEA:18629"/>
        <dbReference type="ChEBI" id="CHEBI:15378"/>
        <dbReference type="ChEBI" id="CHEBI:30616"/>
        <dbReference type="ChEBI" id="CHEBI:57540"/>
        <dbReference type="ChEBI" id="CHEBI:58349"/>
        <dbReference type="ChEBI" id="CHEBI:456216"/>
        <dbReference type="EC" id="2.7.1.23"/>
    </reaction>
</comment>
<comment type="cofactor">
    <cofactor evidence="1">
        <name>a divalent metal cation</name>
        <dbReference type="ChEBI" id="CHEBI:60240"/>
    </cofactor>
</comment>
<comment type="subcellular location">
    <subcellularLocation>
        <location evidence="1">Cytoplasm</location>
    </subcellularLocation>
</comment>
<comment type="similarity">
    <text evidence="1">Belongs to the NAD kinase family.</text>
</comment>
<reference key="1">
    <citation type="journal article" date="2003" name="Nucleic Acids Res.">
        <title>The complete genome sequence and analysis of Corynebacterium diphtheriae NCTC13129.</title>
        <authorList>
            <person name="Cerdeno-Tarraga A.-M."/>
            <person name="Efstratiou A."/>
            <person name="Dover L.G."/>
            <person name="Holden M.T.G."/>
            <person name="Pallen M.J."/>
            <person name="Bentley S.D."/>
            <person name="Besra G.S."/>
            <person name="Churcher C.M."/>
            <person name="James K.D."/>
            <person name="De Zoysa A."/>
            <person name="Chillingworth T."/>
            <person name="Cronin A."/>
            <person name="Dowd L."/>
            <person name="Feltwell T."/>
            <person name="Hamlin N."/>
            <person name="Holroyd S."/>
            <person name="Jagels K."/>
            <person name="Moule S."/>
            <person name="Quail M.A."/>
            <person name="Rabbinowitsch E."/>
            <person name="Rutherford K.M."/>
            <person name="Thomson N.R."/>
            <person name="Unwin L."/>
            <person name="Whitehead S."/>
            <person name="Barrell B.G."/>
            <person name="Parkhill J."/>
        </authorList>
    </citation>
    <scope>NUCLEOTIDE SEQUENCE [LARGE SCALE GENOMIC DNA]</scope>
    <source>
        <strain>ATCC 700971 / NCTC 13129 / Biotype gravis</strain>
    </source>
</reference>
<keyword id="KW-0067">ATP-binding</keyword>
<keyword id="KW-0963">Cytoplasm</keyword>
<keyword id="KW-0418">Kinase</keyword>
<keyword id="KW-0520">NAD</keyword>
<keyword id="KW-0521">NADP</keyword>
<keyword id="KW-0547">Nucleotide-binding</keyword>
<keyword id="KW-1185">Reference proteome</keyword>
<keyword id="KW-0808">Transferase</keyword>
<accession>Q6NHF7</accession>
<sequence>MTIDCHEDRRVLLVPHTGRPQNVASAALAAELLDDSGVGVRVLVPAEDTTVATHPVLGQFERVSHSPQATQSVDLVLVLGGDGTFLRAADLAHGADLPVLGINLGHVGFLAEWEKDSLDEAVRRVTKGSFRIEERMTLDVSVYDSNGTAIGRGWALNEVSIENSNRSGVLDATLEIDSRPVSSFGCDGIIVSTPTGSTAYAFSAGGPVLWPELDAILVVPNNAHALFTKPLVVSPRSSVAVESHPSAFPATAVMDGFRSISVPPGARVEVKRGSRSIKWVRLDDIPFTDRLVTKLRLPVEGWRGPKNMIPQINPHSA</sequence>
<name>NADK_CORDI</name>
<feature type="chain" id="PRO_0000229626" description="NAD kinase">
    <location>
        <begin position="1"/>
        <end position="317"/>
    </location>
</feature>
<feature type="active site" description="Proton acceptor" evidence="1">
    <location>
        <position position="82"/>
    </location>
</feature>
<feature type="binding site" evidence="1">
    <location>
        <begin position="82"/>
        <end position="83"/>
    </location>
    <ligand>
        <name>NAD(+)</name>
        <dbReference type="ChEBI" id="CHEBI:57540"/>
    </ligand>
</feature>
<feature type="binding site" evidence="1">
    <location>
        <position position="87"/>
    </location>
    <ligand>
        <name>NAD(+)</name>
        <dbReference type="ChEBI" id="CHEBI:57540"/>
    </ligand>
</feature>
<feature type="binding site" evidence="1">
    <location>
        <begin position="157"/>
        <end position="158"/>
    </location>
    <ligand>
        <name>NAD(+)</name>
        <dbReference type="ChEBI" id="CHEBI:57540"/>
    </ligand>
</feature>
<feature type="binding site" evidence="1">
    <location>
        <position position="187"/>
    </location>
    <ligand>
        <name>NAD(+)</name>
        <dbReference type="ChEBI" id="CHEBI:57540"/>
    </ligand>
</feature>
<feature type="binding site" evidence="1">
    <location>
        <begin position="198"/>
        <end position="203"/>
    </location>
    <ligand>
        <name>NAD(+)</name>
        <dbReference type="ChEBI" id="CHEBI:57540"/>
    </ligand>
</feature>
<gene>
    <name evidence="1" type="primary">nadK</name>
    <name type="ordered locus">DIP1181</name>
</gene>
<proteinExistence type="inferred from homology"/>
<organism>
    <name type="scientific">Corynebacterium diphtheriae (strain ATCC 700971 / NCTC 13129 / Biotype gravis)</name>
    <dbReference type="NCBI Taxonomy" id="257309"/>
    <lineage>
        <taxon>Bacteria</taxon>
        <taxon>Bacillati</taxon>
        <taxon>Actinomycetota</taxon>
        <taxon>Actinomycetes</taxon>
        <taxon>Mycobacteriales</taxon>
        <taxon>Corynebacteriaceae</taxon>
        <taxon>Corynebacterium</taxon>
    </lineage>
</organism>
<protein>
    <recommendedName>
        <fullName evidence="1">NAD kinase</fullName>
        <ecNumber evidence="1">2.7.1.23</ecNumber>
    </recommendedName>
    <alternativeName>
        <fullName evidence="1">ATP-dependent NAD kinase</fullName>
    </alternativeName>
</protein>
<evidence type="ECO:0000255" key="1">
    <source>
        <dbReference type="HAMAP-Rule" id="MF_00361"/>
    </source>
</evidence>
<dbReference type="EC" id="2.7.1.23" evidence="1"/>
<dbReference type="EMBL" id="BX248357">
    <property type="protein sequence ID" value="CAE49705.1"/>
    <property type="molecule type" value="Genomic_DNA"/>
</dbReference>
<dbReference type="RefSeq" id="WP_010934867.1">
    <property type="nucleotide sequence ID" value="NC_002935.2"/>
</dbReference>
<dbReference type="SMR" id="Q6NHF7"/>
<dbReference type="STRING" id="257309.DIP1181"/>
<dbReference type="KEGG" id="cdi:DIP1181"/>
<dbReference type="HOGENOM" id="CLU_008831_0_0_11"/>
<dbReference type="Proteomes" id="UP000002198">
    <property type="component" value="Chromosome"/>
</dbReference>
<dbReference type="GO" id="GO:0005737">
    <property type="term" value="C:cytoplasm"/>
    <property type="evidence" value="ECO:0007669"/>
    <property type="project" value="UniProtKB-SubCell"/>
</dbReference>
<dbReference type="GO" id="GO:0005524">
    <property type="term" value="F:ATP binding"/>
    <property type="evidence" value="ECO:0007669"/>
    <property type="project" value="UniProtKB-KW"/>
</dbReference>
<dbReference type="GO" id="GO:0046872">
    <property type="term" value="F:metal ion binding"/>
    <property type="evidence" value="ECO:0007669"/>
    <property type="project" value="UniProtKB-UniRule"/>
</dbReference>
<dbReference type="GO" id="GO:0051287">
    <property type="term" value="F:NAD binding"/>
    <property type="evidence" value="ECO:0007669"/>
    <property type="project" value="UniProtKB-ARBA"/>
</dbReference>
<dbReference type="GO" id="GO:0003951">
    <property type="term" value="F:NAD+ kinase activity"/>
    <property type="evidence" value="ECO:0007669"/>
    <property type="project" value="UniProtKB-UniRule"/>
</dbReference>
<dbReference type="GO" id="GO:0019674">
    <property type="term" value="P:NAD metabolic process"/>
    <property type="evidence" value="ECO:0007669"/>
    <property type="project" value="InterPro"/>
</dbReference>
<dbReference type="GO" id="GO:0006741">
    <property type="term" value="P:NADP biosynthetic process"/>
    <property type="evidence" value="ECO:0007669"/>
    <property type="project" value="UniProtKB-UniRule"/>
</dbReference>
<dbReference type="FunFam" id="2.60.200.30:FF:000007">
    <property type="entry name" value="NAD kinase"/>
    <property type="match status" value="1"/>
</dbReference>
<dbReference type="Gene3D" id="3.40.50.10330">
    <property type="entry name" value="Probable inorganic polyphosphate/atp-NAD kinase, domain 1"/>
    <property type="match status" value="1"/>
</dbReference>
<dbReference type="Gene3D" id="2.60.200.30">
    <property type="entry name" value="Probable inorganic polyphosphate/atp-NAD kinase, domain 2"/>
    <property type="match status" value="1"/>
</dbReference>
<dbReference type="HAMAP" id="MF_00361">
    <property type="entry name" value="NAD_kinase"/>
    <property type="match status" value="1"/>
</dbReference>
<dbReference type="InterPro" id="IPR017438">
    <property type="entry name" value="ATP-NAD_kinase_N"/>
</dbReference>
<dbReference type="InterPro" id="IPR017437">
    <property type="entry name" value="ATP-NAD_kinase_PpnK-typ_C"/>
</dbReference>
<dbReference type="InterPro" id="IPR016064">
    <property type="entry name" value="NAD/diacylglycerol_kinase_sf"/>
</dbReference>
<dbReference type="InterPro" id="IPR002504">
    <property type="entry name" value="NADK"/>
</dbReference>
<dbReference type="NCBIfam" id="NF002892">
    <property type="entry name" value="PRK03372.1"/>
    <property type="match status" value="1"/>
</dbReference>
<dbReference type="PANTHER" id="PTHR20275">
    <property type="entry name" value="NAD KINASE"/>
    <property type="match status" value="1"/>
</dbReference>
<dbReference type="PANTHER" id="PTHR20275:SF0">
    <property type="entry name" value="NAD KINASE"/>
    <property type="match status" value="1"/>
</dbReference>
<dbReference type="Pfam" id="PF01513">
    <property type="entry name" value="NAD_kinase"/>
    <property type="match status" value="1"/>
</dbReference>
<dbReference type="Pfam" id="PF20143">
    <property type="entry name" value="NAD_kinase_C"/>
    <property type="match status" value="1"/>
</dbReference>
<dbReference type="SUPFAM" id="SSF111331">
    <property type="entry name" value="NAD kinase/diacylglycerol kinase-like"/>
    <property type="match status" value="1"/>
</dbReference>